<proteinExistence type="inferred from homology"/>
<reference key="1">
    <citation type="journal article" date="2007" name="Proc. Natl. Acad. Sci. U.S.A.">
        <title>Deep-sea vent epsilon-proteobacterial genomes provide insights into emergence of pathogens.</title>
        <authorList>
            <person name="Nakagawa S."/>
            <person name="Takaki Y."/>
            <person name="Shimamura S."/>
            <person name="Reysenbach A.-L."/>
            <person name="Takai K."/>
            <person name="Horikoshi K."/>
        </authorList>
    </citation>
    <scope>NUCLEOTIDE SEQUENCE [LARGE SCALE GENOMIC DNA]</scope>
    <source>
        <strain>NBC37-1</strain>
    </source>
</reference>
<dbReference type="EC" id="6.5.1.2" evidence="1"/>
<dbReference type="EMBL" id="AP009179">
    <property type="protein sequence ID" value="BAF71421.1"/>
    <property type="molecule type" value="Genomic_DNA"/>
</dbReference>
<dbReference type="RefSeq" id="WP_011980154.1">
    <property type="nucleotide sequence ID" value="NC_009663.1"/>
</dbReference>
<dbReference type="SMR" id="A6Q7G2"/>
<dbReference type="STRING" id="387093.SUN_0461"/>
<dbReference type="KEGG" id="sun:SUN_0461"/>
<dbReference type="eggNOG" id="COG0272">
    <property type="taxonomic scope" value="Bacteria"/>
</dbReference>
<dbReference type="HOGENOM" id="CLU_007764_2_1_7"/>
<dbReference type="OrthoDB" id="9759736at2"/>
<dbReference type="Proteomes" id="UP000006378">
    <property type="component" value="Chromosome"/>
</dbReference>
<dbReference type="GO" id="GO:0005829">
    <property type="term" value="C:cytosol"/>
    <property type="evidence" value="ECO:0007669"/>
    <property type="project" value="TreeGrafter"/>
</dbReference>
<dbReference type="GO" id="GO:0003677">
    <property type="term" value="F:DNA binding"/>
    <property type="evidence" value="ECO:0007669"/>
    <property type="project" value="InterPro"/>
</dbReference>
<dbReference type="GO" id="GO:0003911">
    <property type="term" value="F:DNA ligase (NAD+) activity"/>
    <property type="evidence" value="ECO:0007669"/>
    <property type="project" value="UniProtKB-UniRule"/>
</dbReference>
<dbReference type="GO" id="GO:0046872">
    <property type="term" value="F:metal ion binding"/>
    <property type="evidence" value="ECO:0007669"/>
    <property type="project" value="UniProtKB-KW"/>
</dbReference>
<dbReference type="GO" id="GO:0006281">
    <property type="term" value="P:DNA repair"/>
    <property type="evidence" value="ECO:0007669"/>
    <property type="project" value="UniProtKB-KW"/>
</dbReference>
<dbReference type="GO" id="GO:0006260">
    <property type="term" value="P:DNA replication"/>
    <property type="evidence" value="ECO:0007669"/>
    <property type="project" value="UniProtKB-KW"/>
</dbReference>
<dbReference type="CDD" id="cd17748">
    <property type="entry name" value="BRCT_DNA_ligase_like"/>
    <property type="match status" value="1"/>
</dbReference>
<dbReference type="CDD" id="cd00114">
    <property type="entry name" value="LIGANc"/>
    <property type="match status" value="1"/>
</dbReference>
<dbReference type="FunFam" id="1.10.150.20:FF:000007">
    <property type="entry name" value="DNA ligase"/>
    <property type="match status" value="1"/>
</dbReference>
<dbReference type="FunFam" id="2.40.50.140:FF:000012">
    <property type="entry name" value="DNA ligase"/>
    <property type="match status" value="1"/>
</dbReference>
<dbReference type="Gene3D" id="6.20.10.30">
    <property type="match status" value="1"/>
</dbReference>
<dbReference type="Gene3D" id="1.10.150.20">
    <property type="entry name" value="5' to 3' exonuclease, C-terminal subdomain"/>
    <property type="match status" value="2"/>
</dbReference>
<dbReference type="Gene3D" id="3.40.50.10190">
    <property type="entry name" value="BRCT domain"/>
    <property type="match status" value="1"/>
</dbReference>
<dbReference type="Gene3D" id="3.30.470.30">
    <property type="entry name" value="DNA ligase/mRNA capping enzyme"/>
    <property type="match status" value="1"/>
</dbReference>
<dbReference type="Gene3D" id="1.10.287.610">
    <property type="entry name" value="Helix hairpin bin"/>
    <property type="match status" value="1"/>
</dbReference>
<dbReference type="Gene3D" id="2.40.50.140">
    <property type="entry name" value="Nucleic acid-binding proteins"/>
    <property type="match status" value="1"/>
</dbReference>
<dbReference type="HAMAP" id="MF_01588">
    <property type="entry name" value="DNA_ligase_A"/>
    <property type="match status" value="1"/>
</dbReference>
<dbReference type="InterPro" id="IPR001357">
    <property type="entry name" value="BRCT_dom"/>
</dbReference>
<dbReference type="InterPro" id="IPR036420">
    <property type="entry name" value="BRCT_dom_sf"/>
</dbReference>
<dbReference type="InterPro" id="IPR041663">
    <property type="entry name" value="DisA/LigA_HHH"/>
</dbReference>
<dbReference type="InterPro" id="IPR001679">
    <property type="entry name" value="DNA_ligase"/>
</dbReference>
<dbReference type="InterPro" id="IPR018239">
    <property type="entry name" value="DNA_ligase_AS"/>
</dbReference>
<dbReference type="InterPro" id="IPR013839">
    <property type="entry name" value="DNAligase_adenylation"/>
</dbReference>
<dbReference type="InterPro" id="IPR013840">
    <property type="entry name" value="DNAligase_N"/>
</dbReference>
<dbReference type="InterPro" id="IPR003583">
    <property type="entry name" value="Hlx-hairpin-Hlx_DNA-bd_motif"/>
</dbReference>
<dbReference type="InterPro" id="IPR012340">
    <property type="entry name" value="NA-bd_OB-fold"/>
</dbReference>
<dbReference type="InterPro" id="IPR004150">
    <property type="entry name" value="NAD_DNA_ligase_OB"/>
</dbReference>
<dbReference type="InterPro" id="IPR010994">
    <property type="entry name" value="RuvA_2-like"/>
</dbReference>
<dbReference type="NCBIfam" id="TIGR00575">
    <property type="entry name" value="dnlj"/>
    <property type="match status" value="1"/>
</dbReference>
<dbReference type="NCBIfam" id="NF005932">
    <property type="entry name" value="PRK07956.1"/>
    <property type="match status" value="1"/>
</dbReference>
<dbReference type="PANTHER" id="PTHR23389">
    <property type="entry name" value="CHROMOSOME TRANSMISSION FIDELITY FACTOR 18"/>
    <property type="match status" value="1"/>
</dbReference>
<dbReference type="PANTHER" id="PTHR23389:SF9">
    <property type="entry name" value="DNA LIGASE"/>
    <property type="match status" value="1"/>
</dbReference>
<dbReference type="Pfam" id="PF00533">
    <property type="entry name" value="BRCT"/>
    <property type="match status" value="1"/>
</dbReference>
<dbReference type="Pfam" id="PF01653">
    <property type="entry name" value="DNA_ligase_aden"/>
    <property type="match status" value="1"/>
</dbReference>
<dbReference type="Pfam" id="PF03120">
    <property type="entry name" value="DNA_ligase_OB"/>
    <property type="match status" value="1"/>
</dbReference>
<dbReference type="Pfam" id="PF12826">
    <property type="entry name" value="HHH_2"/>
    <property type="match status" value="1"/>
</dbReference>
<dbReference type="Pfam" id="PF14520">
    <property type="entry name" value="HHH_5"/>
    <property type="match status" value="1"/>
</dbReference>
<dbReference type="PIRSF" id="PIRSF001604">
    <property type="entry name" value="LigA"/>
    <property type="match status" value="1"/>
</dbReference>
<dbReference type="SMART" id="SM00292">
    <property type="entry name" value="BRCT"/>
    <property type="match status" value="1"/>
</dbReference>
<dbReference type="SMART" id="SM00278">
    <property type="entry name" value="HhH1"/>
    <property type="match status" value="4"/>
</dbReference>
<dbReference type="SMART" id="SM00532">
    <property type="entry name" value="LIGANc"/>
    <property type="match status" value="1"/>
</dbReference>
<dbReference type="SUPFAM" id="SSF52113">
    <property type="entry name" value="BRCT domain"/>
    <property type="match status" value="1"/>
</dbReference>
<dbReference type="SUPFAM" id="SSF56091">
    <property type="entry name" value="DNA ligase/mRNA capping enzyme, catalytic domain"/>
    <property type="match status" value="1"/>
</dbReference>
<dbReference type="SUPFAM" id="SSF50249">
    <property type="entry name" value="Nucleic acid-binding proteins"/>
    <property type="match status" value="1"/>
</dbReference>
<dbReference type="SUPFAM" id="SSF47781">
    <property type="entry name" value="RuvA domain 2-like"/>
    <property type="match status" value="1"/>
</dbReference>
<dbReference type="PROSITE" id="PS50172">
    <property type="entry name" value="BRCT"/>
    <property type="match status" value="1"/>
</dbReference>
<dbReference type="PROSITE" id="PS01055">
    <property type="entry name" value="DNA_LIGASE_N1"/>
    <property type="match status" value="1"/>
</dbReference>
<gene>
    <name evidence="1" type="primary">ligA</name>
    <name type="ordered locus">SUN_0461</name>
</gene>
<accession>A6Q7G2</accession>
<name>DNLJ_SULNB</name>
<comment type="function">
    <text evidence="1">DNA ligase that catalyzes the formation of phosphodiester linkages between 5'-phosphoryl and 3'-hydroxyl groups in double-stranded DNA using NAD as a coenzyme and as the energy source for the reaction. It is essential for DNA replication and repair of damaged DNA.</text>
</comment>
<comment type="catalytic activity">
    <reaction evidence="1">
        <text>NAD(+) + (deoxyribonucleotide)n-3'-hydroxyl + 5'-phospho-(deoxyribonucleotide)m = (deoxyribonucleotide)n+m + AMP + beta-nicotinamide D-nucleotide.</text>
        <dbReference type="EC" id="6.5.1.2"/>
    </reaction>
</comment>
<comment type="cofactor">
    <cofactor evidence="1">
        <name>Mg(2+)</name>
        <dbReference type="ChEBI" id="CHEBI:18420"/>
    </cofactor>
    <cofactor evidence="1">
        <name>Mn(2+)</name>
        <dbReference type="ChEBI" id="CHEBI:29035"/>
    </cofactor>
</comment>
<comment type="similarity">
    <text evidence="1">Belongs to the NAD-dependent DNA ligase family. LigA subfamily.</text>
</comment>
<sequence length="648" mass="73353">MTYDEYKEKVKTLKKWAYAYYVEDNPVATDEEYDRLYHEVLDYEMKHPDKALEDSPTKRVGGIVRDEFTKAKHIKRMWSMEDVFSKEEVQDWLDRVEKNVGECDYFCEPKFDGASMNLLYDDGKLLRAITRGDGVVGEEVTDNVRTIRSVPLVIDYKGLIEIRGEVVIRKDDFEQINEERLKAGEAPFANPRNAAAGSLRQLDSSVTAKRRLVFYPWGIGENTLDQKKLSEKMEFIYGQGFLRPPYHEACHTIDNIEKFYQFLISKRDEIPMMMDGMVIKVDEIEKQEELGYTVKFPRWMCAYKFPAVEKVTQIRAITLQVGRTGVITPVAEIEPVNIEGAMVSRATLHNFDEIERKDIRIGDHVIIIRSGDVIPKITKVLIDRRTGDEIPVERPTHCPTCGSELLDEGALIKCQNLECPDRVINTIIHFAKKGCMDIDGLGSKIVEQLVKEGKIHDILDLYSLTYEDLADLEGFKEKKISNLLDAIAASKGAPLHRLITAMGIEHIGEVASRALALEFGLGIVDAKYEDIVAIDGIGEEMANSLLEFMRVNREKVLKLFNTIKPTVEKKVEAKENPFKGKIVVLTGTMSESRGKIKEMLEELGAKVSGSVSKKTDFVIYGEDAGSKLTKAESLGVPTLTEDEMRAML</sequence>
<protein>
    <recommendedName>
        <fullName evidence="1">DNA ligase</fullName>
        <ecNumber evidence="1">6.5.1.2</ecNumber>
    </recommendedName>
    <alternativeName>
        <fullName evidence="1">Polydeoxyribonucleotide synthase [NAD(+)]</fullName>
    </alternativeName>
</protein>
<keyword id="KW-0227">DNA damage</keyword>
<keyword id="KW-0234">DNA repair</keyword>
<keyword id="KW-0235">DNA replication</keyword>
<keyword id="KW-0436">Ligase</keyword>
<keyword id="KW-0460">Magnesium</keyword>
<keyword id="KW-0464">Manganese</keyword>
<keyword id="KW-0479">Metal-binding</keyword>
<keyword id="KW-0520">NAD</keyword>
<keyword id="KW-0862">Zinc</keyword>
<feature type="chain" id="PRO_0000313475" description="DNA ligase">
    <location>
        <begin position="1"/>
        <end position="648"/>
    </location>
</feature>
<feature type="domain" description="BRCT" evidence="1">
    <location>
        <begin position="573"/>
        <end position="648"/>
    </location>
</feature>
<feature type="active site" description="N6-AMP-lysine intermediate" evidence="1">
    <location>
        <position position="110"/>
    </location>
</feature>
<feature type="binding site" evidence="1">
    <location>
        <begin position="30"/>
        <end position="34"/>
    </location>
    <ligand>
        <name>NAD(+)</name>
        <dbReference type="ChEBI" id="CHEBI:57540"/>
    </ligand>
</feature>
<feature type="binding site" evidence="1">
    <location>
        <begin position="79"/>
        <end position="80"/>
    </location>
    <ligand>
        <name>NAD(+)</name>
        <dbReference type="ChEBI" id="CHEBI:57540"/>
    </ligand>
</feature>
<feature type="binding site" evidence="1">
    <location>
        <position position="108"/>
    </location>
    <ligand>
        <name>NAD(+)</name>
        <dbReference type="ChEBI" id="CHEBI:57540"/>
    </ligand>
</feature>
<feature type="binding site" evidence="1">
    <location>
        <position position="131"/>
    </location>
    <ligand>
        <name>NAD(+)</name>
        <dbReference type="ChEBI" id="CHEBI:57540"/>
    </ligand>
</feature>
<feature type="binding site" evidence="1">
    <location>
        <position position="165"/>
    </location>
    <ligand>
        <name>NAD(+)</name>
        <dbReference type="ChEBI" id="CHEBI:57540"/>
    </ligand>
</feature>
<feature type="binding site" evidence="1">
    <location>
        <position position="280"/>
    </location>
    <ligand>
        <name>NAD(+)</name>
        <dbReference type="ChEBI" id="CHEBI:57540"/>
    </ligand>
</feature>
<feature type="binding site" evidence="1">
    <location>
        <position position="304"/>
    </location>
    <ligand>
        <name>NAD(+)</name>
        <dbReference type="ChEBI" id="CHEBI:57540"/>
    </ligand>
</feature>
<feature type="binding site" evidence="1">
    <location>
        <position position="398"/>
    </location>
    <ligand>
        <name>Zn(2+)</name>
        <dbReference type="ChEBI" id="CHEBI:29105"/>
    </ligand>
</feature>
<feature type="binding site" evidence="1">
    <location>
        <position position="401"/>
    </location>
    <ligand>
        <name>Zn(2+)</name>
        <dbReference type="ChEBI" id="CHEBI:29105"/>
    </ligand>
</feature>
<feature type="binding site" evidence="1">
    <location>
        <position position="414"/>
    </location>
    <ligand>
        <name>Zn(2+)</name>
        <dbReference type="ChEBI" id="CHEBI:29105"/>
    </ligand>
</feature>
<feature type="binding site" evidence="1">
    <location>
        <position position="419"/>
    </location>
    <ligand>
        <name>Zn(2+)</name>
        <dbReference type="ChEBI" id="CHEBI:29105"/>
    </ligand>
</feature>
<organism>
    <name type="scientific">Sulfurovum sp. (strain NBC37-1)</name>
    <dbReference type="NCBI Taxonomy" id="387093"/>
    <lineage>
        <taxon>Bacteria</taxon>
        <taxon>Pseudomonadati</taxon>
        <taxon>Campylobacterota</taxon>
        <taxon>Epsilonproteobacteria</taxon>
        <taxon>Campylobacterales</taxon>
        <taxon>Sulfurovaceae</taxon>
        <taxon>Sulfurovum</taxon>
    </lineage>
</organism>
<evidence type="ECO:0000255" key="1">
    <source>
        <dbReference type="HAMAP-Rule" id="MF_01588"/>
    </source>
</evidence>